<geneLocation type="plasmid">
    <name>pRHL1</name>
</geneLocation>
<organism>
    <name type="scientific">Rhodococcus jostii (strain RHA1)</name>
    <dbReference type="NCBI Taxonomy" id="101510"/>
    <lineage>
        <taxon>Bacteria</taxon>
        <taxon>Bacillati</taxon>
        <taxon>Actinomycetota</taxon>
        <taxon>Actinomycetes</taxon>
        <taxon>Mycobacteriales</taxon>
        <taxon>Nocardiaceae</taxon>
        <taxon>Rhodococcus</taxon>
    </lineage>
</organism>
<reference key="1">
    <citation type="journal article" date="2006" name="Proc. Natl. Acad. Sci. U.S.A.">
        <title>The complete genome of Rhodococcus sp. RHA1 provides insights into a catabolic powerhouse.</title>
        <authorList>
            <person name="McLeod M.P."/>
            <person name="Warren R.L."/>
            <person name="Hsiao W.W.L."/>
            <person name="Araki N."/>
            <person name="Myhre M."/>
            <person name="Fernandes C."/>
            <person name="Miyazawa D."/>
            <person name="Wong W."/>
            <person name="Lillquist A.L."/>
            <person name="Wang D."/>
            <person name="Dosanjh M."/>
            <person name="Hara H."/>
            <person name="Petrescu A."/>
            <person name="Morin R.D."/>
            <person name="Yang G."/>
            <person name="Stott J.M."/>
            <person name="Schein J.E."/>
            <person name="Shin H."/>
            <person name="Smailus D."/>
            <person name="Siddiqui A.S."/>
            <person name="Marra M.A."/>
            <person name="Jones S.J.M."/>
            <person name="Holt R."/>
            <person name="Brinkman F.S.L."/>
            <person name="Miyauchi K."/>
            <person name="Fukuda M."/>
            <person name="Davies J.E."/>
            <person name="Mohn W.W."/>
            <person name="Eltis L.D."/>
        </authorList>
    </citation>
    <scope>NUCLEOTIDE SEQUENCE [LARGE SCALE GENOMIC DNA]</scope>
    <source>
        <strain>RHA1</strain>
    </source>
</reference>
<comment type="catalytic activity">
    <reaction evidence="1">
        <text>(S)-4-hydroxy-2-oxopentanoate = acetaldehyde + pyruvate</text>
        <dbReference type="Rhea" id="RHEA:22624"/>
        <dbReference type="ChEBI" id="CHEBI:15343"/>
        <dbReference type="ChEBI" id="CHEBI:15361"/>
        <dbReference type="ChEBI" id="CHEBI:73143"/>
        <dbReference type="EC" id="4.1.3.39"/>
    </reaction>
</comment>
<comment type="similarity">
    <text evidence="1">Belongs to the 4-hydroxy-2-oxovalerate aldolase family.</text>
</comment>
<sequence length="342" mass="36405">MTTRLFIQDVTLRDGMHAVRHRITPDDVGKIVAALDAAGVDGIEVAHGDGLAGGSLNYGPGSNTDWEWIEAAADNLTHARLTTLLLPGIGTIAELEHAYVLGVRSIRIATHCTEADVSAQHIGKARELGMDVSGFLMMSHMASPAELAAQAKLMESYGAHCVYVTDSGGRLTMDGVRERVRAYRDVLDEATEIGIHAHENLSLSVANSVVAVEEGVTRVDASLAGHGAGAGNCPIEPFIAVADLQGWKHNSDLFALQDAADDLVRPLQDRPVRVDRETLTLGYAGVYSSFLRHAEAASQRYGIDVRTILLEVGRRGLVGGQEDLIVDIALDLLAANSDSVAS</sequence>
<name>HOA5_RHOJR</name>
<dbReference type="EC" id="4.1.3.39" evidence="1"/>
<dbReference type="EMBL" id="CP000432">
    <property type="protein sequence ID" value="ABG99130.1"/>
    <property type="molecule type" value="Genomic_DNA"/>
</dbReference>
<dbReference type="RefSeq" id="WP_011599025.1">
    <property type="nucleotide sequence ID" value="NC_008269.1"/>
</dbReference>
<dbReference type="SMR" id="Q0S006"/>
<dbReference type="KEGG" id="rha:RHA1_ro08083"/>
<dbReference type="PATRIC" id="fig|101510.16.peg.7425"/>
<dbReference type="HOGENOM" id="CLU_049173_0_0_11"/>
<dbReference type="OrthoDB" id="9803573at2"/>
<dbReference type="Proteomes" id="UP000008710">
    <property type="component" value="Plasmid pRHL1"/>
</dbReference>
<dbReference type="GO" id="GO:0003852">
    <property type="term" value="F:2-isopropylmalate synthase activity"/>
    <property type="evidence" value="ECO:0007669"/>
    <property type="project" value="TreeGrafter"/>
</dbReference>
<dbReference type="GO" id="GO:0008701">
    <property type="term" value="F:4-hydroxy-2-oxovalerate aldolase activity"/>
    <property type="evidence" value="ECO:0007669"/>
    <property type="project" value="UniProtKB-UniRule"/>
</dbReference>
<dbReference type="GO" id="GO:0030145">
    <property type="term" value="F:manganese ion binding"/>
    <property type="evidence" value="ECO:0007669"/>
    <property type="project" value="UniProtKB-UniRule"/>
</dbReference>
<dbReference type="GO" id="GO:0009056">
    <property type="term" value="P:catabolic process"/>
    <property type="evidence" value="ECO:0007669"/>
    <property type="project" value="UniProtKB-KW"/>
</dbReference>
<dbReference type="GO" id="GO:0009098">
    <property type="term" value="P:L-leucine biosynthetic process"/>
    <property type="evidence" value="ECO:0007669"/>
    <property type="project" value="TreeGrafter"/>
</dbReference>
<dbReference type="CDD" id="cd07943">
    <property type="entry name" value="DRE_TIM_HOA"/>
    <property type="match status" value="1"/>
</dbReference>
<dbReference type="Gene3D" id="1.10.8.60">
    <property type="match status" value="1"/>
</dbReference>
<dbReference type="Gene3D" id="3.20.20.70">
    <property type="entry name" value="Aldolase class I"/>
    <property type="match status" value="1"/>
</dbReference>
<dbReference type="HAMAP" id="MF_01656">
    <property type="entry name" value="HOA"/>
    <property type="match status" value="1"/>
</dbReference>
<dbReference type="InterPro" id="IPR050073">
    <property type="entry name" value="2-IPM_HCS-like"/>
</dbReference>
<dbReference type="InterPro" id="IPR017629">
    <property type="entry name" value="4OH_2_O-val_aldolase"/>
</dbReference>
<dbReference type="InterPro" id="IPR013785">
    <property type="entry name" value="Aldolase_TIM"/>
</dbReference>
<dbReference type="InterPro" id="IPR012425">
    <property type="entry name" value="DmpG_comm"/>
</dbReference>
<dbReference type="InterPro" id="IPR035685">
    <property type="entry name" value="DRE_TIM_HOA"/>
</dbReference>
<dbReference type="InterPro" id="IPR000891">
    <property type="entry name" value="PYR_CT"/>
</dbReference>
<dbReference type="NCBIfam" id="TIGR03217">
    <property type="entry name" value="4OH_2_O_val_ald"/>
    <property type="match status" value="1"/>
</dbReference>
<dbReference type="NCBIfam" id="NF006049">
    <property type="entry name" value="PRK08195.1"/>
    <property type="match status" value="1"/>
</dbReference>
<dbReference type="PANTHER" id="PTHR10277:SF9">
    <property type="entry name" value="2-ISOPROPYLMALATE SYNTHASE 1, CHLOROPLASTIC-RELATED"/>
    <property type="match status" value="1"/>
</dbReference>
<dbReference type="PANTHER" id="PTHR10277">
    <property type="entry name" value="HOMOCITRATE SYNTHASE-RELATED"/>
    <property type="match status" value="1"/>
</dbReference>
<dbReference type="Pfam" id="PF07836">
    <property type="entry name" value="DmpG_comm"/>
    <property type="match status" value="1"/>
</dbReference>
<dbReference type="Pfam" id="PF00682">
    <property type="entry name" value="HMGL-like"/>
    <property type="match status" value="1"/>
</dbReference>
<dbReference type="SUPFAM" id="SSF51569">
    <property type="entry name" value="Aldolase"/>
    <property type="match status" value="1"/>
</dbReference>
<dbReference type="SUPFAM" id="SSF89000">
    <property type="entry name" value="post-HMGL domain-like"/>
    <property type="match status" value="1"/>
</dbReference>
<dbReference type="PROSITE" id="PS50991">
    <property type="entry name" value="PYR_CT"/>
    <property type="match status" value="1"/>
</dbReference>
<evidence type="ECO:0000255" key="1">
    <source>
        <dbReference type="HAMAP-Rule" id="MF_01656"/>
    </source>
</evidence>
<proteinExistence type="inferred from homology"/>
<keyword id="KW-0058">Aromatic hydrocarbons catabolism</keyword>
<keyword id="KW-0456">Lyase</keyword>
<keyword id="KW-0464">Manganese</keyword>
<keyword id="KW-0479">Metal-binding</keyword>
<keyword id="KW-0614">Plasmid</keyword>
<gene>
    <name type="ordered locus">RHA1_ro08083</name>
</gene>
<accession>Q0S006</accession>
<protein>
    <recommendedName>
        <fullName evidence="1">4-hydroxy-2-oxovalerate aldolase 5</fullName>
        <shortName evidence="1">HOA 5</shortName>
        <ecNumber evidence="1">4.1.3.39</ecNumber>
    </recommendedName>
    <alternativeName>
        <fullName evidence="1">4-hydroxy-2-keto-pentanoic acid aldolase 5</fullName>
    </alternativeName>
    <alternativeName>
        <fullName evidence="1">4-hydroxy-2-oxopentanoate aldolase 5</fullName>
    </alternativeName>
</protein>
<feature type="chain" id="PRO_0000387903" description="4-hydroxy-2-oxovalerate aldolase 5">
    <location>
        <begin position="1"/>
        <end position="342"/>
    </location>
</feature>
<feature type="domain" description="Pyruvate carboxyltransferase" evidence="1">
    <location>
        <begin position="5"/>
        <end position="257"/>
    </location>
</feature>
<feature type="active site" description="Proton acceptor" evidence="1">
    <location>
        <position position="17"/>
    </location>
</feature>
<feature type="binding site" evidence="1">
    <location>
        <begin position="13"/>
        <end position="14"/>
    </location>
    <ligand>
        <name>substrate</name>
    </ligand>
</feature>
<feature type="binding site" evidence="1">
    <location>
        <position position="14"/>
    </location>
    <ligand>
        <name>Mn(2+)</name>
        <dbReference type="ChEBI" id="CHEBI:29035"/>
    </ligand>
</feature>
<feature type="binding site" evidence="1">
    <location>
        <position position="167"/>
    </location>
    <ligand>
        <name>substrate</name>
    </ligand>
</feature>
<feature type="binding site" evidence="1">
    <location>
        <position position="196"/>
    </location>
    <ligand>
        <name>Mn(2+)</name>
        <dbReference type="ChEBI" id="CHEBI:29035"/>
    </ligand>
</feature>
<feature type="binding site" evidence="1">
    <location>
        <position position="196"/>
    </location>
    <ligand>
        <name>substrate</name>
    </ligand>
</feature>
<feature type="binding site" evidence="1">
    <location>
        <position position="198"/>
    </location>
    <ligand>
        <name>Mn(2+)</name>
        <dbReference type="ChEBI" id="CHEBI:29035"/>
    </ligand>
</feature>
<feature type="binding site" evidence="1">
    <location>
        <position position="287"/>
    </location>
    <ligand>
        <name>substrate</name>
    </ligand>
</feature>
<feature type="site" description="Transition state stabilizer" evidence="1">
    <location>
        <position position="13"/>
    </location>
</feature>